<evidence type="ECO:0000255" key="1">
    <source>
        <dbReference type="HAMAP-Rule" id="MF_01101"/>
    </source>
</evidence>
<protein>
    <recommendedName>
        <fullName evidence="1">UPF0208 membrane protein YfbV</fullName>
    </recommendedName>
</protein>
<feature type="chain" id="PRO_1000149902" description="UPF0208 membrane protein YfbV">
    <location>
        <begin position="1"/>
        <end position="151"/>
    </location>
</feature>
<feature type="transmembrane region" description="Helical" evidence="1">
    <location>
        <begin position="46"/>
        <end position="65"/>
    </location>
</feature>
<feature type="transmembrane region" description="Helical" evidence="1">
    <location>
        <begin position="69"/>
        <end position="91"/>
    </location>
</feature>
<comment type="subcellular location">
    <subcellularLocation>
        <location evidence="1">Cell inner membrane</location>
        <topology evidence="1">Multi-pass membrane protein</topology>
    </subcellularLocation>
</comment>
<comment type="similarity">
    <text evidence="1">Belongs to the UPF0208 family.</text>
</comment>
<dbReference type="EMBL" id="CP000857">
    <property type="protein sequence ID" value="ACN45534.1"/>
    <property type="molecule type" value="Genomic_DNA"/>
</dbReference>
<dbReference type="RefSeq" id="WP_000106617.1">
    <property type="nucleotide sequence ID" value="NC_012125.1"/>
</dbReference>
<dbReference type="KEGG" id="sei:SPC_1372"/>
<dbReference type="HOGENOM" id="CLU_128746_0_0_6"/>
<dbReference type="Proteomes" id="UP000001599">
    <property type="component" value="Chromosome"/>
</dbReference>
<dbReference type="GO" id="GO:0005886">
    <property type="term" value="C:plasma membrane"/>
    <property type="evidence" value="ECO:0007669"/>
    <property type="project" value="UniProtKB-SubCell"/>
</dbReference>
<dbReference type="HAMAP" id="MF_01101">
    <property type="entry name" value="UPF0208"/>
    <property type="match status" value="1"/>
</dbReference>
<dbReference type="InterPro" id="IPR007334">
    <property type="entry name" value="UPF0208"/>
</dbReference>
<dbReference type="NCBIfam" id="NF002493">
    <property type="entry name" value="PRK01816.1"/>
    <property type="match status" value="1"/>
</dbReference>
<dbReference type="Pfam" id="PF04217">
    <property type="entry name" value="DUF412"/>
    <property type="match status" value="1"/>
</dbReference>
<reference key="1">
    <citation type="journal article" date="2009" name="PLoS ONE">
        <title>Salmonella paratyphi C: genetic divergence from Salmonella choleraesuis and pathogenic convergence with Salmonella typhi.</title>
        <authorList>
            <person name="Liu W.-Q."/>
            <person name="Feng Y."/>
            <person name="Wang Y."/>
            <person name="Zou Q.-H."/>
            <person name="Chen F."/>
            <person name="Guo J.-T."/>
            <person name="Peng Y.-H."/>
            <person name="Jin Y."/>
            <person name="Li Y.-G."/>
            <person name="Hu S.-N."/>
            <person name="Johnston R.N."/>
            <person name="Liu G.-R."/>
            <person name="Liu S.-L."/>
        </authorList>
    </citation>
    <scope>NUCLEOTIDE SEQUENCE [LARGE SCALE GENOMIC DNA]</scope>
    <source>
        <strain>RKS4594</strain>
    </source>
</reference>
<accession>C0Q030</accession>
<proteinExistence type="inferred from homology"/>
<keyword id="KW-0997">Cell inner membrane</keyword>
<keyword id="KW-1003">Cell membrane</keyword>
<keyword id="KW-0472">Membrane</keyword>
<keyword id="KW-0812">Transmembrane</keyword>
<keyword id="KW-1133">Transmembrane helix</keyword>
<sequence length="151" mass="17201">MSTPDNRSVNFFSLFRRGQHYAKTWPMEKRLAPVFVENRVIRMTRYAIRFMPPVAVFTLCWQIALGGQLGPAVATALFALSLPMQGLWWLGKRSVTPLPPSILNWFYEVRGKLQEAGQALAPVEGKPDYQALADTLKRAFKQLDKTFLDDL</sequence>
<organism>
    <name type="scientific">Salmonella paratyphi C (strain RKS4594)</name>
    <dbReference type="NCBI Taxonomy" id="476213"/>
    <lineage>
        <taxon>Bacteria</taxon>
        <taxon>Pseudomonadati</taxon>
        <taxon>Pseudomonadota</taxon>
        <taxon>Gammaproteobacteria</taxon>
        <taxon>Enterobacterales</taxon>
        <taxon>Enterobacteriaceae</taxon>
        <taxon>Salmonella</taxon>
    </lineage>
</organism>
<gene>
    <name evidence="1" type="primary">yfbV</name>
    <name type="ordered locus">SPC_1372</name>
</gene>
<name>YFBV_SALPC</name>